<feature type="chain" id="PRO_0000134840" description="6,7-dimethyl-8-ribityllumazine synthase">
    <location>
        <begin position="1"/>
        <end position="143"/>
    </location>
</feature>
<feature type="active site" description="Proton donor" evidence="1">
    <location>
        <position position="77"/>
    </location>
</feature>
<feature type="binding site" evidence="1">
    <location>
        <position position="13"/>
    </location>
    <ligand>
        <name>5-amino-6-(D-ribitylamino)uracil</name>
        <dbReference type="ChEBI" id="CHEBI:15934"/>
    </ligand>
</feature>
<feature type="binding site" evidence="1">
    <location>
        <begin position="45"/>
        <end position="47"/>
    </location>
    <ligand>
        <name>5-amino-6-(D-ribitylamino)uracil</name>
        <dbReference type="ChEBI" id="CHEBI:15934"/>
    </ligand>
</feature>
<feature type="binding site" evidence="1">
    <location>
        <begin position="69"/>
        <end position="71"/>
    </location>
    <ligand>
        <name>5-amino-6-(D-ribitylamino)uracil</name>
        <dbReference type="ChEBI" id="CHEBI:15934"/>
    </ligand>
</feature>
<feature type="binding site" evidence="1">
    <location>
        <begin position="74"/>
        <end position="75"/>
    </location>
    <ligand>
        <name>(2S)-2-hydroxy-3-oxobutyl phosphate</name>
        <dbReference type="ChEBI" id="CHEBI:58830"/>
    </ligand>
</feature>
<feature type="binding site" evidence="1">
    <location>
        <position position="102"/>
    </location>
    <ligand>
        <name>5-amino-6-(D-ribitylamino)uracil</name>
        <dbReference type="ChEBI" id="CHEBI:15934"/>
    </ligand>
</feature>
<feature type="binding site" evidence="1">
    <location>
        <position position="117"/>
    </location>
    <ligand>
        <name>(2S)-2-hydroxy-3-oxobutyl phosphate</name>
        <dbReference type="ChEBI" id="CHEBI:58830"/>
    </ligand>
</feature>
<reference key="1">
    <citation type="journal article" date="1997" name="Nature">
        <title>The complete genome sequence of the hyperthermophilic, sulphate-reducing archaeon Archaeoglobus fulgidus.</title>
        <authorList>
            <person name="Klenk H.-P."/>
            <person name="Clayton R.A."/>
            <person name="Tomb J.-F."/>
            <person name="White O."/>
            <person name="Nelson K.E."/>
            <person name="Ketchum K.A."/>
            <person name="Dodson R.J."/>
            <person name="Gwinn M.L."/>
            <person name="Hickey E.K."/>
            <person name="Peterson J.D."/>
            <person name="Richardson D.L."/>
            <person name="Kerlavage A.R."/>
            <person name="Graham D.E."/>
            <person name="Kyrpides N.C."/>
            <person name="Fleischmann R.D."/>
            <person name="Quackenbush J."/>
            <person name="Lee N.H."/>
            <person name="Sutton G.G."/>
            <person name="Gill S.R."/>
            <person name="Kirkness E.F."/>
            <person name="Dougherty B.A."/>
            <person name="McKenney K."/>
            <person name="Adams M.D."/>
            <person name="Loftus B.J."/>
            <person name="Peterson S.N."/>
            <person name="Reich C.I."/>
            <person name="McNeil L.K."/>
            <person name="Badger J.H."/>
            <person name="Glodek A."/>
            <person name="Zhou L."/>
            <person name="Overbeek R."/>
            <person name="Gocayne J.D."/>
            <person name="Weidman J.F."/>
            <person name="McDonald L.A."/>
            <person name="Utterback T.R."/>
            <person name="Cotton M.D."/>
            <person name="Spriggs T."/>
            <person name="Artiach P."/>
            <person name="Kaine B.P."/>
            <person name="Sykes S.M."/>
            <person name="Sadow P.W."/>
            <person name="D'Andrea K.P."/>
            <person name="Bowman C."/>
            <person name="Fujii C."/>
            <person name="Garland S.A."/>
            <person name="Mason T.M."/>
            <person name="Olsen G.J."/>
            <person name="Fraser C.M."/>
            <person name="Smith H.O."/>
            <person name="Woese C.R."/>
            <person name="Venter J.C."/>
        </authorList>
    </citation>
    <scope>NUCLEOTIDE SEQUENCE [LARGE SCALE GENOMIC DNA]</scope>
    <source>
        <strain>ATCC 49558 / DSM 4304 / JCM 9628 / NBRC 100126 / VC-16</strain>
    </source>
</reference>
<protein>
    <recommendedName>
        <fullName evidence="1">6,7-dimethyl-8-ribityllumazine synthase</fullName>
        <shortName evidence="1">DMRL synthase</shortName>
        <shortName evidence="1">LS</shortName>
        <shortName evidence="1">Lumazine synthase</shortName>
        <ecNumber evidence="1">2.5.1.78</ecNumber>
    </recommendedName>
</protein>
<dbReference type="EC" id="2.5.1.78" evidence="1"/>
<dbReference type="EMBL" id="AE000782">
    <property type="protein sequence ID" value="AAB89124.1"/>
    <property type="molecule type" value="Genomic_DNA"/>
</dbReference>
<dbReference type="PIR" id="H69515">
    <property type="entry name" value="H69515"/>
</dbReference>
<dbReference type="RefSeq" id="WP_010879619.1">
    <property type="nucleotide sequence ID" value="NC_000917.1"/>
</dbReference>
<dbReference type="SMR" id="O28152"/>
<dbReference type="STRING" id="224325.AF_2128"/>
<dbReference type="PaxDb" id="224325-AF_2128"/>
<dbReference type="EnsemblBacteria" id="AAB89124">
    <property type="protein sequence ID" value="AAB89124"/>
    <property type="gene ID" value="AF_2128"/>
</dbReference>
<dbReference type="GeneID" id="24795877"/>
<dbReference type="KEGG" id="afu:AF_2128"/>
<dbReference type="eggNOG" id="arCOG01323">
    <property type="taxonomic scope" value="Archaea"/>
</dbReference>
<dbReference type="HOGENOM" id="CLU_089358_3_1_2"/>
<dbReference type="OrthoDB" id="7610at2157"/>
<dbReference type="PhylomeDB" id="O28152"/>
<dbReference type="BRENDA" id="2.5.1.78">
    <property type="organism ID" value="414"/>
</dbReference>
<dbReference type="UniPathway" id="UPA00275">
    <property type="reaction ID" value="UER00404"/>
</dbReference>
<dbReference type="Proteomes" id="UP000002199">
    <property type="component" value="Chromosome"/>
</dbReference>
<dbReference type="GO" id="GO:0009349">
    <property type="term" value="C:riboflavin synthase complex"/>
    <property type="evidence" value="ECO:0007669"/>
    <property type="project" value="InterPro"/>
</dbReference>
<dbReference type="GO" id="GO:0000906">
    <property type="term" value="F:6,7-dimethyl-8-ribityllumazine synthase activity"/>
    <property type="evidence" value="ECO:0007669"/>
    <property type="project" value="UniProtKB-UniRule"/>
</dbReference>
<dbReference type="GO" id="GO:0009231">
    <property type="term" value="P:riboflavin biosynthetic process"/>
    <property type="evidence" value="ECO:0007669"/>
    <property type="project" value="UniProtKB-UniRule"/>
</dbReference>
<dbReference type="CDD" id="cd09211">
    <property type="entry name" value="Lumazine_synthase_archaeal"/>
    <property type="match status" value="1"/>
</dbReference>
<dbReference type="FunFam" id="3.40.50.960:FF:000003">
    <property type="entry name" value="6,7-dimethyl-8-ribityllumazine synthase"/>
    <property type="match status" value="1"/>
</dbReference>
<dbReference type="Gene3D" id="3.40.50.960">
    <property type="entry name" value="Lumazine/riboflavin synthase"/>
    <property type="match status" value="1"/>
</dbReference>
<dbReference type="HAMAP" id="MF_00178">
    <property type="entry name" value="Lumazine_synth"/>
    <property type="match status" value="1"/>
</dbReference>
<dbReference type="InterPro" id="IPR034964">
    <property type="entry name" value="LS"/>
</dbReference>
<dbReference type="InterPro" id="IPR002180">
    <property type="entry name" value="LS/RS"/>
</dbReference>
<dbReference type="InterPro" id="IPR036467">
    <property type="entry name" value="LS/RS_sf"/>
</dbReference>
<dbReference type="NCBIfam" id="TIGR00114">
    <property type="entry name" value="lumazine-synth"/>
    <property type="match status" value="1"/>
</dbReference>
<dbReference type="PANTHER" id="PTHR21058:SF0">
    <property type="entry name" value="6,7-DIMETHYL-8-RIBITYLLUMAZINE SYNTHASE"/>
    <property type="match status" value="1"/>
</dbReference>
<dbReference type="PANTHER" id="PTHR21058">
    <property type="entry name" value="6,7-DIMETHYL-8-RIBITYLLUMAZINE SYNTHASE DMRL SYNTHASE LUMAZINE SYNTHASE"/>
    <property type="match status" value="1"/>
</dbReference>
<dbReference type="Pfam" id="PF00885">
    <property type="entry name" value="DMRL_synthase"/>
    <property type="match status" value="1"/>
</dbReference>
<dbReference type="SUPFAM" id="SSF52121">
    <property type="entry name" value="Lumazine synthase"/>
    <property type="match status" value="1"/>
</dbReference>
<evidence type="ECO:0000255" key="1">
    <source>
        <dbReference type="HAMAP-Rule" id="MF_00178"/>
    </source>
</evidence>
<keyword id="KW-1185">Reference proteome</keyword>
<keyword id="KW-0686">Riboflavin biosynthesis</keyword>
<keyword id="KW-0808">Transferase</keyword>
<organism>
    <name type="scientific">Archaeoglobus fulgidus (strain ATCC 49558 / DSM 4304 / JCM 9628 / NBRC 100126 / VC-16)</name>
    <dbReference type="NCBI Taxonomy" id="224325"/>
    <lineage>
        <taxon>Archaea</taxon>
        <taxon>Methanobacteriati</taxon>
        <taxon>Methanobacteriota</taxon>
        <taxon>Archaeoglobi</taxon>
        <taxon>Archaeoglobales</taxon>
        <taxon>Archaeoglobaceae</taxon>
        <taxon>Archaeoglobus</taxon>
    </lineage>
</organism>
<gene>
    <name evidence="1" type="primary">ribH</name>
    <name type="synonym">ribE</name>
    <name type="ordered locus">AF_2128</name>
</gene>
<accession>O28152</accession>
<proteinExistence type="inferred from homology"/>
<name>RISB_ARCFU</name>
<comment type="function">
    <text evidence="1">Catalyzes the formation of 6,7-dimethyl-8-ribityllumazine by condensation of 5-amino-6-(D-ribitylamino)uracil with 3,4-dihydroxy-2-butanone 4-phosphate. This is the penultimate step in the biosynthesis of riboflavin.</text>
</comment>
<comment type="catalytic activity">
    <reaction evidence="1">
        <text>(2S)-2-hydroxy-3-oxobutyl phosphate + 5-amino-6-(D-ribitylamino)uracil = 6,7-dimethyl-8-(1-D-ribityl)lumazine + phosphate + 2 H2O + H(+)</text>
        <dbReference type="Rhea" id="RHEA:26152"/>
        <dbReference type="ChEBI" id="CHEBI:15377"/>
        <dbReference type="ChEBI" id="CHEBI:15378"/>
        <dbReference type="ChEBI" id="CHEBI:15934"/>
        <dbReference type="ChEBI" id="CHEBI:43474"/>
        <dbReference type="ChEBI" id="CHEBI:58201"/>
        <dbReference type="ChEBI" id="CHEBI:58830"/>
        <dbReference type="EC" id="2.5.1.78"/>
    </reaction>
</comment>
<comment type="pathway">
    <text evidence="1">Cofactor biosynthesis; riboflavin biosynthesis; riboflavin from 2-hydroxy-3-oxobutyl phosphate and 5-amino-6-(D-ribitylamino)uracil: step 1/2.</text>
</comment>
<comment type="similarity">
    <text evidence="1">Belongs to the DMRL synthase family.</text>
</comment>
<sequence length="143" mass="15645">MEKVKLGMVVAEFNRDITYMMEILGKEHAEFLGAEVSEVIRVPGTFDIPIAVKKMLEKGRVDAVVAIGCVIEGETEHDEIVAQHAARKIMDLSLEYGKPVTLGISGPGMGRIAATERVDYAKRAVEAAVKLVKRLKEYDAEGS</sequence>